<geneLocation type="chloroplast"/>
<reference key="1">
    <citation type="journal article" date="2008" name="J. Phycol.">
        <title>Deep division in the Chlorophyceae (Chlorophyta) revealed by chloroplast phylogenomic analyseS.</title>
        <authorList>
            <person name="Turmel M."/>
            <person name="Brouard J.-S."/>
            <person name="Gagnon C."/>
            <person name="Otis C."/>
            <person name="Lemieux C."/>
        </authorList>
        <dbReference type="AGRICOLA" id="IND44059346"/>
    </citation>
    <scope>NUCLEOTIDE SEQUENCE [GENOMIC DNA]</scope>
    <source>
        <strain>SAG 575-1b / CCAP 575/1B / UTEX LB 40</strain>
    </source>
</reference>
<reference key="2">
    <citation type="journal article" date="2008" name="BMC Genomics">
        <title>Chloroplast DNA sequence of the green alga Oedogonium cardiacum (Chlorophyceae): unique genome architecture, derived characters shared with the Chaetophorales and novel genes acquired through horizontal transfer.</title>
        <authorList>
            <person name="Brouard J.-S."/>
            <person name="Otis C."/>
            <person name="Lemieux C."/>
            <person name="Turmel M."/>
        </authorList>
    </citation>
    <scope>NUCLEOTIDE SEQUENCE [LARGE SCALE GENOMIC DNA]</scope>
    <source>
        <strain>SAG 575-1b / CCAP 575/1B / UTEX LB 40</strain>
    </source>
</reference>
<evidence type="ECO:0000255" key="1">
    <source>
        <dbReference type="HAMAP-Rule" id="MF_01317"/>
    </source>
</evidence>
<dbReference type="EMBL" id="EF587350">
    <property type="protein sequence ID" value="ABU88190.1"/>
    <property type="molecule type" value="Genomic_DNA"/>
</dbReference>
<dbReference type="EMBL" id="EU677193">
    <property type="protein sequence ID" value="ACC97235.1"/>
    <property type="molecule type" value="Genomic_DNA"/>
</dbReference>
<dbReference type="RefSeq" id="YP_002000396.1">
    <property type="nucleotide sequence ID" value="NC_011031.1"/>
</dbReference>
<dbReference type="SMR" id="B2X1X7"/>
<dbReference type="GeneID" id="6440071"/>
<dbReference type="GO" id="GO:0009535">
    <property type="term" value="C:chloroplast thylakoid membrane"/>
    <property type="evidence" value="ECO:0007669"/>
    <property type="project" value="UniProtKB-SubCell"/>
</dbReference>
<dbReference type="GO" id="GO:0009539">
    <property type="term" value="C:photosystem II reaction center"/>
    <property type="evidence" value="ECO:0007669"/>
    <property type="project" value="InterPro"/>
</dbReference>
<dbReference type="GO" id="GO:0015979">
    <property type="term" value="P:photosynthesis"/>
    <property type="evidence" value="ECO:0007669"/>
    <property type="project" value="UniProtKB-UniRule"/>
</dbReference>
<dbReference type="HAMAP" id="MF_01317">
    <property type="entry name" value="PSII_PsbL"/>
    <property type="match status" value="1"/>
</dbReference>
<dbReference type="InterPro" id="IPR003372">
    <property type="entry name" value="PSII_PsbL"/>
</dbReference>
<dbReference type="InterPro" id="IPR037266">
    <property type="entry name" value="PSII_PsbL_sf"/>
</dbReference>
<dbReference type="NCBIfam" id="NF001972">
    <property type="entry name" value="PRK00753.1"/>
    <property type="match status" value="1"/>
</dbReference>
<dbReference type="Pfam" id="PF02419">
    <property type="entry name" value="PsbL"/>
    <property type="match status" value="1"/>
</dbReference>
<dbReference type="SUPFAM" id="SSF161017">
    <property type="entry name" value="Photosystem II reaction center protein L, PsbL"/>
    <property type="match status" value="1"/>
</dbReference>
<comment type="function">
    <text evidence="1">One of the components of the core complex of photosystem II (PSII). PSII is a light-driven water:plastoquinone oxidoreductase that uses light energy to abstract electrons from H(2)O, generating O(2) and a proton gradient subsequently used for ATP formation. It consists of a core antenna complex that captures photons, and an electron transfer chain that converts photonic excitation into a charge separation. This subunit is found at the monomer-monomer interface and is required for correct PSII assembly and/or dimerization.</text>
</comment>
<comment type="subunit">
    <text evidence="1">PSII is composed of 1 copy each of membrane proteins PsbA, PsbB, PsbC, PsbD, PsbE, PsbF, PsbH, PsbI, PsbJ, PsbK, PsbL, PsbM, PsbT, PsbX, PsbY, PsbZ, Psb30/Ycf12, at least 3 peripheral proteins of the oxygen-evolving complex and a large number of cofactors. It forms dimeric complexes.</text>
</comment>
<comment type="subcellular location">
    <subcellularLocation>
        <location evidence="1">Plastid</location>
        <location evidence="1">Chloroplast thylakoid membrane</location>
        <topology evidence="1">Single-pass membrane protein</topology>
    </subcellularLocation>
</comment>
<comment type="similarity">
    <text evidence="1">Belongs to the PsbL family.</text>
</comment>
<gene>
    <name evidence="1" type="primary">psbL</name>
</gene>
<accession>B2X1X7</accession>
<organism>
    <name type="scientific">Oedogonium cardiacum</name>
    <name type="common">Filamentous green alga</name>
    <dbReference type="NCBI Taxonomy" id="55995"/>
    <lineage>
        <taxon>Eukaryota</taxon>
        <taxon>Viridiplantae</taxon>
        <taxon>Chlorophyta</taxon>
        <taxon>core chlorophytes</taxon>
        <taxon>Chlorophyceae</taxon>
        <taxon>OCC clade</taxon>
        <taxon>Oedogoniales</taxon>
        <taxon>Oedogoniaceae</taxon>
        <taxon>Oedogonium</taxon>
    </lineage>
</organism>
<sequence>MSQFDTNKLNEIDINKVSLSEVISRPNPNKQVVELNRTSLYWGLLLIFVLAVLFSSYIFN</sequence>
<proteinExistence type="inferred from homology"/>
<keyword id="KW-0150">Chloroplast</keyword>
<keyword id="KW-0472">Membrane</keyword>
<keyword id="KW-0602">Photosynthesis</keyword>
<keyword id="KW-0604">Photosystem II</keyword>
<keyword id="KW-0934">Plastid</keyword>
<keyword id="KW-0674">Reaction center</keyword>
<keyword id="KW-0793">Thylakoid</keyword>
<keyword id="KW-0812">Transmembrane</keyword>
<keyword id="KW-1133">Transmembrane helix</keyword>
<name>PSBL_OEDCA</name>
<protein>
    <recommendedName>
        <fullName evidence="1">Photosystem II reaction center protein L</fullName>
        <shortName evidence="1">PSII-L</shortName>
    </recommendedName>
</protein>
<feature type="chain" id="PRO_0000353263" description="Photosystem II reaction center protein L">
    <location>
        <begin position="1"/>
        <end position="60"/>
    </location>
</feature>
<feature type="transmembrane region" description="Helical" evidence="1">
    <location>
        <begin position="39"/>
        <end position="59"/>
    </location>
</feature>